<reference key="1">
    <citation type="submission" date="2000-05" db="EMBL/GenBank/DDBJ databases">
        <title>Isolation, sequence and functional expression of mouse muscarinic acetylcholine receptor genes.</title>
        <authorList>
            <person name="Gomeza J."/>
            <person name="Wess J."/>
        </authorList>
    </citation>
    <scope>NUCLEOTIDE SEQUENCE [GENOMIC DNA]</scope>
</reference>
<reference key="2">
    <citation type="journal article" date="2009" name="PLoS Biol.">
        <title>Lineage-specific biology revealed by a finished genome assembly of the mouse.</title>
        <authorList>
            <person name="Church D.M."/>
            <person name="Goodstadt L."/>
            <person name="Hillier L.W."/>
            <person name="Zody M.C."/>
            <person name="Goldstein S."/>
            <person name="She X."/>
            <person name="Bult C.J."/>
            <person name="Agarwala R."/>
            <person name="Cherry J.L."/>
            <person name="DiCuccio M."/>
            <person name="Hlavina W."/>
            <person name="Kapustin Y."/>
            <person name="Meric P."/>
            <person name="Maglott D."/>
            <person name="Birtle Z."/>
            <person name="Marques A.C."/>
            <person name="Graves T."/>
            <person name="Zhou S."/>
            <person name="Teague B."/>
            <person name="Potamousis K."/>
            <person name="Churas C."/>
            <person name="Place M."/>
            <person name="Herschleb J."/>
            <person name="Runnheim R."/>
            <person name="Forrest D."/>
            <person name="Amos-Landgraf J."/>
            <person name="Schwartz D.C."/>
            <person name="Cheng Z."/>
            <person name="Lindblad-Toh K."/>
            <person name="Eichler E.E."/>
            <person name="Ponting C.P."/>
        </authorList>
    </citation>
    <scope>NUCLEOTIDE SEQUENCE [LARGE SCALE GENOMIC DNA]</scope>
    <source>
        <strain>C57BL/6J</strain>
    </source>
</reference>
<reference key="3">
    <citation type="journal article" date="2010" name="Cell">
        <title>A tissue-specific atlas of mouse protein phosphorylation and expression.</title>
        <authorList>
            <person name="Huttlin E.L."/>
            <person name="Jedrychowski M.P."/>
            <person name="Elias J.E."/>
            <person name="Goswami T."/>
            <person name="Rad R."/>
            <person name="Beausoleil S.A."/>
            <person name="Villen J."/>
            <person name="Haas W."/>
            <person name="Sowa M.E."/>
            <person name="Gygi S.P."/>
        </authorList>
    </citation>
    <scope>PHOSPHORYLATION [LARGE SCALE ANALYSIS] AT SER-232</scope>
    <scope>IDENTIFICATION BY MASS SPECTROMETRY [LARGE SCALE ANALYSIS]</scope>
    <source>
        <tissue>Brain</tissue>
        <tissue>Heart</tissue>
    </source>
</reference>
<name>ACM2_MOUSE</name>
<organism>
    <name type="scientific">Mus musculus</name>
    <name type="common">Mouse</name>
    <dbReference type="NCBI Taxonomy" id="10090"/>
    <lineage>
        <taxon>Eukaryota</taxon>
        <taxon>Metazoa</taxon>
        <taxon>Chordata</taxon>
        <taxon>Craniata</taxon>
        <taxon>Vertebrata</taxon>
        <taxon>Euteleostomi</taxon>
        <taxon>Mammalia</taxon>
        <taxon>Eutheria</taxon>
        <taxon>Euarchontoglires</taxon>
        <taxon>Glires</taxon>
        <taxon>Rodentia</taxon>
        <taxon>Myomorpha</taxon>
        <taxon>Muroidea</taxon>
        <taxon>Muridae</taxon>
        <taxon>Murinae</taxon>
        <taxon>Mus</taxon>
        <taxon>Mus</taxon>
    </lineage>
</organism>
<proteinExistence type="evidence at protein level"/>
<sequence>MNNSTNSSNNGLAITSPYKTFEVVFIVLVAGSLSLVTIIGNILVMVSIKVNRHLQTVNNYFLFSLACADLIIGVFSMNLYTLYTVIGYWPLGPVVCDLWLALDYVVSNASVMNLLIISFDRYFCVTKPLTYPVKRTTKMAGMMIAAAWVLSFILWAPAILFWQFIVGVRTVEDGECYIQFFSNAAVTFGTAIAAFYLPVIIMTVLYWHISRASKSRIKKEKKEPVANQDPVSPSLVQGRIVKPNNNNMPGGDGGLEHNKIQNGKAPRDGGTENCVQGEEKESSNDSTSVSAVASNMRDDEITQDENTVSTSLGHSKDDNSRQTCIKIVTKTQKGDACTPTSTTVELVGSSGQNGDEKQNIVARKIVKMTKQPAKKKPPPSREKKVTRTILAILLAFIITWAPYNVMVLINTFCAPCIPNTVWTIGYWLCYINSTINPACYALCNATFKKTFKHLLMCHYKNIGATR</sequence>
<dbReference type="EMBL" id="AF264049">
    <property type="protein sequence ID" value="AAG14343.1"/>
    <property type="molecule type" value="Genomic_DNA"/>
</dbReference>
<dbReference type="EMBL" id="AC113246">
    <property type="status" value="NOT_ANNOTATED_CDS"/>
    <property type="molecule type" value="Genomic_DNA"/>
</dbReference>
<dbReference type="EMBL" id="AC159505">
    <property type="status" value="NOT_ANNOTATED_CDS"/>
    <property type="molecule type" value="Genomic_DNA"/>
</dbReference>
<dbReference type="CCDS" id="CCDS20004.1"/>
<dbReference type="RefSeq" id="NP_001398617.1">
    <property type="nucleotide sequence ID" value="NM_001411688.1"/>
</dbReference>
<dbReference type="RefSeq" id="NP_001398619.1">
    <property type="nucleotide sequence ID" value="NM_001411690.1"/>
</dbReference>
<dbReference type="RefSeq" id="NP_001398620.1">
    <property type="nucleotide sequence ID" value="NM_001411691.1"/>
</dbReference>
<dbReference type="RefSeq" id="NP_001398622.1">
    <property type="nucleotide sequence ID" value="NM_001411693.1"/>
</dbReference>
<dbReference type="RefSeq" id="NP_001398624.1">
    <property type="nucleotide sequence ID" value="NM_001411695.1"/>
</dbReference>
<dbReference type="RefSeq" id="NP_987076.2">
    <property type="nucleotide sequence ID" value="NM_203491.4"/>
</dbReference>
<dbReference type="RefSeq" id="XP_006506199.1">
    <property type="nucleotide sequence ID" value="XM_006506136.2"/>
</dbReference>
<dbReference type="SMR" id="Q9ERZ4"/>
<dbReference type="FunCoup" id="Q9ERZ4">
    <property type="interactions" value="1092"/>
</dbReference>
<dbReference type="STRING" id="10090.ENSMUSP00000130874"/>
<dbReference type="BindingDB" id="Q9ERZ4"/>
<dbReference type="ChEMBL" id="CHEMBL3197"/>
<dbReference type="DrugCentral" id="Q9ERZ4"/>
<dbReference type="GuidetoPHARMACOLOGY" id="14"/>
<dbReference type="GlyCosmos" id="Q9ERZ4">
    <property type="glycosylation" value="3 sites, No reported glycans"/>
</dbReference>
<dbReference type="GlyGen" id="Q9ERZ4">
    <property type="glycosylation" value="3 sites"/>
</dbReference>
<dbReference type="iPTMnet" id="Q9ERZ4"/>
<dbReference type="PhosphoSitePlus" id="Q9ERZ4"/>
<dbReference type="SwissPalm" id="Q9ERZ4"/>
<dbReference type="PaxDb" id="10090-ENSMUSP00000130874"/>
<dbReference type="ProteomicsDB" id="285839"/>
<dbReference type="Antibodypedia" id="18171">
    <property type="antibodies" value="572 antibodies from 39 providers"/>
</dbReference>
<dbReference type="DNASU" id="243764"/>
<dbReference type="Ensembl" id="ENSMUST00000172278.8">
    <property type="protein sequence ID" value="ENSMUSP00000130874.2"/>
    <property type="gene ID" value="ENSMUSG00000045613.10"/>
</dbReference>
<dbReference type="GeneID" id="243764"/>
<dbReference type="KEGG" id="mmu:243764"/>
<dbReference type="UCSC" id="uc009biy.2">
    <property type="organism name" value="mouse"/>
</dbReference>
<dbReference type="AGR" id="MGI:88397"/>
<dbReference type="CTD" id="1129"/>
<dbReference type="MGI" id="MGI:88397">
    <property type="gene designation" value="Chrm2"/>
</dbReference>
<dbReference type="VEuPathDB" id="HostDB:ENSMUSG00000045613"/>
<dbReference type="eggNOG" id="KOG4220">
    <property type="taxonomic scope" value="Eukaryota"/>
</dbReference>
<dbReference type="GeneTree" id="ENSGT00940000158940"/>
<dbReference type="HOGENOM" id="CLU_009579_11_2_1"/>
<dbReference type="InParanoid" id="Q9ERZ4"/>
<dbReference type="OMA" id="TSERQNH"/>
<dbReference type="OrthoDB" id="10071887at2759"/>
<dbReference type="PhylomeDB" id="Q9ERZ4"/>
<dbReference type="TreeFam" id="TF320495"/>
<dbReference type="Reactome" id="R-MMU-390648">
    <property type="pathway name" value="Muscarinic acetylcholine receptors"/>
</dbReference>
<dbReference type="Reactome" id="R-MMU-418594">
    <property type="pathway name" value="G alpha (i) signalling events"/>
</dbReference>
<dbReference type="Reactome" id="R-MMU-8856825">
    <property type="pathway name" value="Cargo recognition for clathrin-mediated endocytosis"/>
</dbReference>
<dbReference type="Reactome" id="R-MMU-8856828">
    <property type="pathway name" value="Clathrin-mediated endocytosis"/>
</dbReference>
<dbReference type="BioGRID-ORCS" id="243764">
    <property type="hits" value="1 hit in 77 CRISPR screens"/>
</dbReference>
<dbReference type="ChiTaRS" id="Chrm2">
    <property type="organism name" value="mouse"/>
</dbReference>
<dbReference type="PRO" id="PR:Q9ERZ4"/>
<dbReference type="Proteomes" id="UP000000589">
    <property type="component" value="Chromosome 6"/>
</dbReference>
<dbReference type="RNAct" id="Q9ERZ4">
    <property type="molecule type" value="protein"/>
</dbReference>
<dbReference type="Bgee" id="ENSMUSG00000045613">
    <property type="expression patterns" value="Expressed in interventricular septum and 68 other cell types or tissues"/>
</dbReference>
<dbReference type="GO" id="GO:0098981">
    <property type="term" value="C:cholinergic synapse"/>
    <property type="evidence" value="ECO:0000315"/>
    <property type="project" value="SynGO"/>
</dbReference>
<dbReference type="GO" id="GO:0036064">
    <property type="term" value="C:ciliary basal body"/>
    <property type="evidence" value="ECO:0007669"/>
    <property type="project" value="Ensembl"/>
</dbReference>
<dbReference type="GO" id="GO:0005794">
    <property type="term" value="C:Golgi apparatus"/>
    <property type="evidence" value="ECO:0007669"/>
    <property type="project" value="Ensembl"/>
</dbReference>
<dbReference type="GO" id="GO:0005730">
    <property type="term" value="C:nucleolus"/>
    <property type="evidence" value="ECO:0007669"/>
    <property type="project" value="Ensembl"/>
</dbReference>
<dbReference type="GO" id="GO:0005886">
    <property type="term" value="C:plasma membrane"/>
    <property type="evidence" value="ECO:0000250"/>
    <property type="project" value="UniProtKB"/>
</dbReference>
<dbReference type="GO" id="GO:0045211">
    <property type="term" value="C:postsynaptic membrane"/>
    <property type="evidence" value="ECO:0007669"/>
    <property type="project" value="UniProtKB-SubCell"/>
</dbReference>
<dbReference type="GO" id="GO:0098793">
    <property type="term" value="C:presynapse"/>
    <property type="evidence" value="ECO:0007669"/>
    <property type="project" value="GOC"/>
</dbReference>
<dbReference type="GO" id="GO:1990763">
    <property type="term" value="F:arrestin family protein binding"/>
    <property type="evidence" value="ECO:0007669"/>
    <property type="project" value="Ensembl"/>
</dbReference>
<dbReference type="GO" id="GO:0016907">
    <property type="term" value="F:G protein-coupled acetylcholine receptor activity"/>
    <property type="evidence" value="ECO:0000315"/>
    <property type="project" value="MGI"/>
</dbReference>
<dbReference type="GO" id="GO:0007213">
    <property type="term" value="P:G protein-coupled acetylcholine receptor signaling pathway"/>
    <property type="evidence" value="ECO:0000315"/>
    <property type="project" value="MGI"/>
</dbReference>
<dbReference type="GO" id="GO:0099171">
    <property type="term" value="P:presynaptic modulation of chemical synaptic transmission"/>
    <property type="evidence" value="ECO:0000315"/>
    <property type="project" value="SynGO"/>
</dbReference>
<dbReference type="GO" id="GO:0008016">
    <property type="term" value="P:regulation of heart contraction"/>
    <property type="evidence" value="ECO:0007669"/>
    <property type="project" value="InterPro"/>
</dbReference>
<dbReference type="GO" id="GO:0009615">
    <property type="term" value="P:response to virus"/>
    <property type="evidence" value="ECO:0007669"/>
    <property type="project" value="Ensembl"/>
</dbReference>
<dbReference type="CDD" id="cd15297">
    <property type="entry name" value="7tmA_mAChR_M2"/>
    <property type="match status" value="1"/>
</dbReference>
<dbReference type="FunFam" id="1.20.1070.10:FF:000038">
    <property type="entry name" value="Muscarinic acetylcholine receptor"/>
    <property type="match status" value="1"/>
</dbReference>
<dbReference type="FunFam" id="1.20.1070.10:FF:000041">
    <property type="entry name" value="Muscarinic acetylcholine receptor"/>
    <property type="match status" value="1"/>
</dbReference>
<dbReference type="Gene3D" id="1.20.1070.10">
    <property type="entry name" value="Rhodopsin 7-helix transmembrane proteins"/>
    <property type="match status" value="2"/>
</dbReference>
<dbReference type="InterPro" id="IPR000276">
    <property type="entry name" value="GPCR_Rhodpsn"/>
</dbReference>
<dbReference type="InterPro" id="IPR017452">
    <property type="entry name" value="GPCR_Rhodpsn_7TM"/>
</dbReference>
<dbReference type="InterPro" id="IPR001065">
    <property type="entry name" value="Musac_Ach_M2_rcpt"/>
</dbReference>
<dbReference type="InterPro" id="IPR000995">
    <property type="entry name" value="Musac_Ach_rcpt"/>
</dbReference>
<dbReference type="PANTHER" id="PTHR24247">
    <property type="entry name" value="5-HYDROXYTRYPTAMINE RECEPTOR"/>
    <property type="match status" value="1"/>
</dbReference>
<dbReference type="PANTHER" id="PTHR24247:SF207">
    <property type="entry name" value="MUSCARINIC ACETYLCHOLINE RECEPTOR M2"/>
    <property type="match status" value="1"/>
</dbReference>
<dbReference type="Pfam" id="PF00001">
    <property type="entry name" value="7tm_1"/>
    <property type="match status" value="1"/>
</dbReference>
<dbReference type="PRINTS" id="PR00237">
    <property type="entry name" value="GPCRRHODOPSN"/>
</dbReference>
<dbReference type="PRINTS" id="PR00243">
    <property type="entry name" value="MUSCARINICR"/>
</dbReference>
<dbReference type="PRINTS" id="PR00539">
    <property type="entry name" value="MUSCRINICM2R"/>
</dbReference>
<dbReference type="SUPFAM" id="SSF81321">
    <property type="entry name" value="Family A G protein-coupled receptor-like"/>
    <property type="match status" value="1"/>
</dbReference>
<dbReference type="PROSITE" id="PS00237">
    <property type="entry name" value="G_PROTEIN_RECEP_F1_1"/>
    <property type="match status" value="1"/>
</dbReference>
<dbReference type="PROSITE" id="PS50262">
    <property type="entry name" value="G_PROTEIN_RECEP_F1_2"/>
    <property type="match status" value="1"/>
</dbReference>
<keyword id="KW-1003">Cell membrane</keyword>
<keyword id="KW-1015">Disulfide bond</keyword>
<keyword id="KW-0297">G-protein coupled receptor</keyword>
<keyword id="KW-0325">Glycoprotein</keyword>
<keyword id="KW-0472">Membrane</keyword>
<keyword id="KW-0597">Phosphoprotein</keyword>
<keyword id="KW-0628">Postsynaptic cell membrane</keyword>
<keyword id="KW-0675">Receptor</keyword>
<keyword id="KW-1185">Reference proteome</keyword>
<keyword id="KW-0770">Synapse</keyword>
<keyword id="KW-0807">Transducer</keyword>
<keyword id="KW-0812">Transmembrane</keyword>
<keyword id="KW-1133">Transmembrane helix</keyword>
<feature type="chain" id="PRO_0000069022" description="Muscarinic acetylcholine receptor M2">
    <location>
        <begin position="1"/>
        <end position="466"/>
    </location>
</feature>
<feature type="topological domain" description="Extracellular" evidence="1">
    <location>
        <begin position="1"/>
        <end position="22"/>
    </location>
</feature>
<feature type="transmembrane region" description="Helical; Name=1" evidence="1">
    <location>
        <begin position="23"/>
        <end position="45"/>
    </location>
</feature>
<feature type="topological domain" description="Cytoplasmic" evidence="1">
    <location>
        <begin position="46"/>
        <end position="59"/>
    </location>
</feature>
<feature type="transmembrane region" description="Helical; Name=2" evidence="1">
    <location>
        <begin position="60"/>
        <end position="80"/>
    </location>
</feature>
<feature type="topological domain" description="Extracellular" evidence="1">
    <location>
        <begin position="81"/>
        <end position="97"/>
    </location>
</feature>
<feature type="transmembrane region" description="Helical; Name=3" evidence="1">
    <location>
        <begin position="98"/>
        <end position="119"/>
    </location>
</feature>
<feature type="topological domain" description="Cytoplasmic" evidence="1">
    <location>
        <begin position="120"/>
        <end position="139"/>
    </location>
</feature>
<feature type="transmembrane region" description="Helical; Name=4" evidence="1">
    <location>
        <begin position="140"/>
        <end position="162"/>
    </location>
</feature>
<feature type="topological domain" description="Extracellular" evidence="1">
    <location>
        <begin position="163"/>
        <end position="184"/>
    </location>
</feature>
<feature type="transmembrane region" description="Helical; Name=5" evidence="1">
    <location>
        <begin position="185"/>
        <end position="209"/>
    </location>
</feature>
<feature type="topological domain" description="Cytoplasmic" evidence="1">
    <location>
        <begin position="210"/>
        <end position="387"/>
    </location>
</feature>
<feature type="transmembrane region" description="Helical; Name=6" evidence="1">
    <location>
        <begin position="388"/>
        <end position="410"/>
    </location>
</feature>
<feature type="topological domain" description="Extracellular" evidence="1">
    <location>
        <begin position="411"/>
        <end position="418"/>
    </location>
</feature>
<feature type="transmembrane region" description="Helical; Name=7" evidence="1">
    <location>
        <begin position="419"/>
        <end position="442"/>
    </location>
</feature>
<feature type="topological domain" description="Cytoplasmic" evidence="1">
    <location>
        <begin position="443"/>
        <end position="466"/>
    </location>
</feature>
<feature type="region of interest" description="Disordered" evidence="4">
    <location>
        <begin position="218"/>
        <end position="320"/>
    </location>
</feature>
<feature type="short sequence motif" description="Important for signaling">
    <location>
        <begin position="120"/>
        <end position="122"/>
    </location>
</feature>
<feature type="short sequence motif" description="Important for signaling">
    <location>
        <begin position="436"/>
        <end position="440"/>
    </location>
</feature>
<feature type="compositionally biased region" description="Basic and acidic residues" evidence="4">
    <location>
        <begin position="254"/>
        <end position="270"/>
    </location>
</feature>
<feature type="compositionally biased region" description="Polar residues" evidence="4">
    <location>
        <begin position="284"/>
        <end position="293"/>
    </location>
</feature>
<feature type="compositionally biased region" description="Polar residues" evidence="4">
    <location>
        <begin position="304"/>
        <end position="313"/>
    </location>
</feature>
<feature type="modified residue" description="Phosphoserine" evidence="6">
    <location>
        <position position="232"/>
    </location>
</feature>
<feature type="modified residue" description="Phosphothreonine" evidence="2">
    <location>
        <position position="446"/>
    </location>
</feature>
<feature type="modified residue" description="Phosphothreonine" evidence="2">
    <location>
        <position position="450"/>
    </location>
</feature>
<feature type="modified residue" description="Phosphothreonine" evidence="2">
    <location>
        <position position="465"/>
    </location>
</feature>
<feature type="glycosylation site" description="N-linked (GlcNAc...) asparagine" evidence="2">
    <location>
        <position position="2"/>
    </location>
</feature>
<feature type="glycosylation site" description="N-linked (GlcNAc...) asparagine" evidence="2">
    <location>
        <position position="3"/>
    </location>
</feature>
<feature type="glycosylation site" description="N-linked (GlcNAc...) asparagine" evidence="2">
    <location>
        <position position="6"/>
    </location>
</feature>
<feature type="disulfide bond" evidence="3">
    <location>
        <begin position="96"/>
        <end position="176"/>
    </location>
</feature>
<feature type="disulfide bond" evidence="3">
    <location>
        <begin position="413"/>
        <end position="416"/>
    </location>
</feature>
<feature type="sequence conflict" description="In Ref. 1; AAG14343." evidence="5" ref="1">
    <original>P</original>
    <variation>L</variation>
    <location>
        <position position="266"/>
    </location>
</feature>
<accession>Q9ERZ4</accession>
<accession>E9Q9P0</accession>
<protein>
    <recommendedName>
        <fullName>Muscarinic acetylcholine receptor M2</fullName>
    </recommendedName>
</protein>
<evidence type="ECO:0000250" key="1"/>
<evidence type="ECO:0000255" key="2"/>
<evidence type="ECO:0000255" key="3">
    <source>
        <dbReference type="PROSITE-ProRule" id="PRU00521"/>
    </source>
</evidence>
<evidence type="ECO:0000256" key="4">
    <source>
        <dbReference type="SAM" id="MobiDB-lite"/>
    </source>
</evidence>
<evidence type="ECO:0000305" key="5"/>
<evidence type="ECO:0007744" key="6">
    <source>
    </source>
</evidence>
<comment type="function">
    <text evidence="1">The muscarinic acetylcholine receptor mediates various cellular responses, including inhibition of adenylate cyclase, breakdown of phosphoinositides and modulation of potassium channels through the action of G proteins. Primary transducing effect is adenylate cyclase inhibition. Signaling promotes phospholipase C activity, leading to the release of inositol trisphosphate (IP3); this then triggers calcium ion release into the cytosol (By similarity).</text>
</comment>
<comment type="subunit">
    <text evidence="1">Interacts with ARRB1 and ARRB2. Interacts with RACK1; the interaction regulates CHRM2 internalization (By similarity).</text>
</comment>
<comment type="subcellular location">
    <subcellularLocation>
        <location evidence="1">Cell membrane</location>
        <topology evidence="1">Multi-pass membrane protein</topology>
    </subcellularLocation>
    <subcellularLocation>
        <location evidence="1">Postsynaptic cell membrane</location>
        <topology evidence="1">Multi-pass membrane protein</topology>
    </subcellularLocation>
    <text evidence="1">Phosphorylation in response to agonist binding promotes receptor internalization.</text>
</comment>
<comment type="PTM">
    <text evidence="1">Phosphorylated in response to agonist treatment.</text>
</comment>
<comment type="similarity">
    <text evidence="3">Belongs to the G-protein coupled receptor 1 family. Muscarinic acetylcholine receptor subfamily. CHRM2 sub-subfamily.</text>
</comment>
<gene>
    <name type="primary">Chrm2</name>
    <name type="synonym">Chrm-2</name>
</gene>